<dbReference type="EC" id="4.3.3.6" evidence="1"/>
<dbReference type="EC" id="3.5.1.2" evidence="1"/>
<dbReference type="EMBL" id="AL939109">
    <property type="protein sequence ID" value="CAB70924.1"/>
    <property type="molecule type" value="Genomic_DNA"/>
</dbReference>
<dbReference type="RefSeq" id="NP_625801.1">
    <property type="nucleotide sequence ID" value="NC_003888.3"/>
</dbReference>
<dbReference type="RefSeq" id="WP_003977305.1">
    <property type="nucleotide sequence ID" value="NZ_VNID01000021.1"/>
</dbReference>
<dbReference type="SMR" id="Q9L287"/>
<dbReference type="FunCoup" id="Q9L287">
    <property type="interactions" value="167"/>
</dbReference>
<dbReference type="STRING" id="100226.gene:17759108"/>
<dbReference type="PaxDb" id="100226-SCO1522"/>
<dbReference type="GeneID" id="91387511"/>
<dbReference type="KEGG" id="sco:SCO1522"/>
<dbReference type="PATRIC" id="fig|100226.15.peg.1531"/>
<dbReference type="eggNOG" id="COG0311">
    <property type="taxonomic scope" value="Bacteria"/>
</dbReference>
<dbReference type="HOGENOM" id="CLU_069674_2_0_11"/>
<dbReference type="InParanoid" id="Q9L287"/>
<dbReference type="OrthoDB" id="9810320at2"/>
<dbReference type="PhylomeDB" id="Q9L287"/>
<dbReference type="UniPathway" id="UPA00245"/>
<dbReference type="Proteomes" id="UP000001973">
    <property type="component" value="Chromosome"/>
</dbReference>
<dbReference type="GO" id="GO:0005829">
    <property type="term" value="C:cytosol"/>
    <property type="evidence" value="ECO:0000318"/>
    <property type="project" value="GO_Central"/>
</dbReference>
<dbReference type="GO" id="GO:1903600">
    <property type="term" value="C:glutaminase complex"/>
    <property type="evidence" value="ECO:0000318"/>
    <property type="project" value="GO_Central"/>
</dbReference>
<dbReference type="GO" id="GO:0004359">
    <property type="term" value="F:glutaminase activity"/>
    <property type="evidence" value="ECO:0007669"/>
    <property type="project" value="UniProtKB-UniRule"/>
</dbReference>
<dbReference type="GO" id="GO:0036381">
    <property type="term" value="F:pyridoxal 5'-phosphate synthase (glutamine hydrolysing) activity"/>
    <property type="evidence" value="ECO:0007669"/>
    <property type="project" value="UniProtKB-UniRule"/>
</dbReference>
<dbReference type="GO" id="GO:0006543">
    <property type="term" value="P:glutamine catabolic process"/>
    <property type="evidence" value="ECO:0007669"/>
    <property type="project" value="UniProtKB-UniRule"/>
</dbReference>
<dbReference type="GO" id="GO:0042823">
    <property type="term" value="P:pyridoxal phosphate biosynthetic process"/>
    <property type="evidence" value="ECO:0000318"/>
    <property type="project" value="GO_Central"/>
</dbReference>
<dbReference type="GO" id="GO:0008614">
    <property type="term" value="P:pyridoxine metabolic process"/>
    <property type="evidence" value="ECO:0000318"/>
    <property type="project" value="GO_Central"/>
</dbReference>
<dbReference type="CDD" id="cd01749">
    <property type="entry name" value="GATase1_PB"/>
    <property type="match status" value="1"/>
</dbReference>
<dbReference type="FunFam" id="3.40.50.880:FF:000010">
    <property type="entry name" value="uncharacterized protein LOC100176842 isoform X2"/>
    <property type="match status" value="1"/>
</dbReference>
<dbReference type="Gene3D" id="3.40.50.880">
    <property type="match status" value="1"/>
</dbReference>
<dbReference type="HAMAP" id="MF_01615">
    <property type="entry name" value="PdxT"/>
    <property type="match status" value="1"/>
</dbReference>
<dbReference type="InterPro" id="IPR029062">
    <property type="entry name" value="Class_I_gatase-like"/>
</dbReference>
<dbReference type="InterPro" id="IPR002161">
    <property type="entry name" value="PdxT/SNO"/>
</dbReference>
<dbReference type="InterPro" id="IPR021196">
    <property type="entry name" value="PdxT/SNO_CS"/>
</dbReference>
<dbReference type="NCBIfam" id="TIGR03800">
    <property type="entry name" value="PLP_synth_Pdx2"/>
    <property type="match status" value="1"/>
</dbReference>
<dbReference type="PANTHER" id="PTHR31559">
    <property type="entry name" value="PYRIDOXAL 5'-PHOSPHATE SYNTHASE SUBUNIT SNO"/>
    <property type="match status" value="1"/>
</dbReference>
<dbReference type="PANTHER" id="PTHR31559:SF0">
    <property type="entry name" value="PYRIDOXAL 5'-PHOSPHATE SYNTHASE SUBUNIT SNO1-RELATED"/>
    <property type="match status" value="1"/>
</dbReference>
<dbReference type="Pfam" id="PF01174">
    <property type="entry name" value="SNO"/>
    <property type="match status" value="1"/>
</dbReference>
<dbReference type="PIRSF" id="PIRSF005639">
    <property type="entry name" value="Glut_amidoT_SNO"/>
    <property type="match status" value="1"/>
</dbReference>
<dbReference type="SUPFAM" id="SSF52317">
    <property type="entry name" value="Class I glutamine amidotransferase-like"/>
    <property type="match status" value="1"/>
</dbReference>
<dbReference type="PROSITE" id="PS01236">
    <property type="entry name" value="PDXT_SNO_1"/>
    <property type="match status" value="1"/>
</dbReference>
<dbReference type="PROSITE" id="PS51130">
    <property type="entry name" value="PDXT_SNO_2"/>
    <property type="match status" value="1"/>
</dbReference>
<accession>Q9L287</accession>
<protein>
    <recommendedName>
        <fullName evidence="1">Pyridoxal 5'-phosphate synthase subunit PdxT</fullName>
        <ecNumber evidence="1">4.3.3.6</ecNumber>
    </recommendedName>
    <alternativeName>
        <fullName evidence="1">Pdx2</fullName>
    </alternativeName>
    <alternativeName>
        <fullName evidence="1">Pyridoxal 5'-phosphate synthase glutaminase subunit</fullName>
        <ecNumber evidence="1">3.5.1.2</ecNumber>
    </alternativeName>
</protein>
<feature type="chain" id="PRO_0000135666" description="Pyridoxal 5'-phosphate synthase subunit PdxT">
    <location>
        <begin position="1"/>
        <end position="202"/>
    </location>
</feature>
<feature type="active site" description="Nucleophile" evidence="1">
    <location>
        <position position="82"/>
    </location>
</feature>
<feature type="active site" description="Charge relay system" evidence="1">
    <location>
        <position position="176"/>
    </location>
</feature>
<feature type="active site" description="Charge relay system" evidence="1">
    <location>
        <position position="178"/>
    </location>
</feature>
<feature type="binding site" evidence="1">
    <location>
        <begin position="50"/>
        <end position="52"/>
    </location>
    <ligand>
        <name>L-glutamine</name>
        <dbReference type="ChEBI" id="CHEBI:58359"/>
    </ligand>
</feature>
<feature type="binding site" evidence="1">
    <location>
        <position position="111"/>
    </location>
    <ligand>
        <name>L-glutamine</name>
        <dbReference type="ChEBI" id="CHEBI:58359"/>
    </ligand>
</feature>
<feature type="binding site" evidence="1">
    <location>
        <begin position="140"/>
        <end position="141"/>
    </location>
    <ligand>
        <name>L-glutamine</name>
        <dbReference type="ChEBI" id="CHEBI:58359"/>
    </ligand>
</feature>
<reference key="1">
    <citation type="journal article" date="2002" name="Nature">
        <title>Complete genome sequence of the model actinomycete Streptomyces coelicolor A3(2).</title>
        <authorList>
            <person name="Bentley S.D."/>
            <person name="Chater K.F."/>
            <person name="Cerdeno-Tarraga A.-M."/>
            <person name="Challis G.L."/>
            <person name="Thomson N.R."/>
            <person name="James K.D."/>
            <person name="Harris D.E."/>
            <person name="Quail M.A."/>
            <person name="Kieser H."/>
            <person name="Harper D."/>
            <person name="Bateman A."/>
            <person name="Brown S."/>
            <person name="Chandra G."/>
            <person name="Chen C.W."/>
            <person name="Collins M."/>
            <person name="Cronin A."/>
            <person name="Fraser A."/>
            <person name="Goble A."/>
            <person name="Hidalgo J."/>
            <person name="Hornsby T."/>
            <person name="Howarth S."/>
            <person name="Huang C.-H."/>
            <person name="Kieser T."/>
            <person name="Larke L."/>
            <person name="Murphy L.D."/>
            <person name="Oliver K."/>
            <person name="O'Neil S."/>
            <person name="Rabbinowitsch E."/>
            <person name="Rajandream M.A."/>
            <person name="Rutherford K.M."/>
            <person name="Rutter S."/>
            <person name="Seeger K."/>
            <person name="Saunders D."/>
            <person name="Sharp S."/>
            <person name="Squares R."/>
            <person name="Squares S."/>
            <person name="Taylor K."/>
            <person name="Warren T."/>
            <person name="Wietzorrek A."/>
            <person name="Woodward J.R."/>
            <person name="Barrell B.G."/>
            <person name="Parkhill J."/>
            <person name="Hopwood D.A."/>
        </authorList>
    </citation>
    <scope>NUCLEOTIDE SEQUENCE [LARGE SCALE GENOMIC DNA]</scope>
    <source>
        <strain>ATCC BAA-471 / A3(2) / M145</strain>
    </source>
</reference>
<organism>
    <name type="scientific">Streptomyces coelicolor (strain ATCC BAA-471 / A3(2) / M145)</name>
    <dbReference type="NCBI Taxonomy" id="100226"/>
    <lineage>
        <taxon>Bacteria</taxon>
        <taxon>Bacillati</taxon>
        <taxon>Actinomycetota</taxon>
        <taxon>Actinomycetes</taxon>
        <taxon>Kitasatosporales</taxon>
        <taxon>Streptomycetaceae</taxon>
        <taxon>Streptomyces</taxon>
        <taxon>Streptomyces albidoflavus group</taxon>
    </lineage>
</organism>
<comment type="function">
    <text evidence="1">Catalyzes the hydrolysis of glutamine to glutamate and ammonia as part of the biosynthesis of pyridoxal 5'-phosphate. The resulting ammonia molecule is channeled to the active site of PdxS.</text>
</comment>
<comment type="catalytic activity">
    <reaction evidence="1">
        <text>aldehydo-D-ribose 5-phosphate + D-glyceraldehyde 3-phosphate + L-glutamine = pyridoxal 5'-phosphate + L-glutamate + phosphate + 3 H2O + H(+)</text>
        <dbReference type="Rhea" id="RHEA:31507"/>
        <dbReference type="ChEBI" id="CHEBI:15377"/>
        <dbReference type="ChEBI" id="CHEBI:15378"/>
        <dbReference type="ChEBI" id="CHEBI:29985"/>
        <dbReference type="ChEBI" id="CHEBI:43474"/>
        <dbReference type="ChEBI" id="CHEBI:58273"/>
        <dbReference type="ChEBI" id="CHEBI:58359"/>
        <dbReference type="ChEBI" id="CHEBI:59776"/>
        <dbReference type="ChEBI" id="CHEBI:597326"/>
        <dbReference type="EC" id="4.3.3.6"/>
    </reaction>
</comment>
<comment type="catalytic activity">
    <reaction evidence="1">
        <text>L-glutamine + H2O = L-glutamate + NH4(+)</text>
        <dbReference type="Rhea" id="RHEA:15889"/>
        <dbReference type="ChEBI" id="CHEBI:15377"/>
        <dbReference type="ChEBI" id="CHEBI:28938"/>
        <dbReference type="ChEBI" id="CHEBI:29985"/>
        <dbReference type="ChEBI" id="CHEBI:58359"/>
        <dbReference type="EC" id="3.5.1.2"/>
    </reaction>
</comment>
<comment type="pathway">
    <text evidence="1">Cofactor biosynthesis; pyridoxal 5'-phosphate biosynthesis.</text>
</comment>
<comment type="subunit">
    <text evidence="1">In the presence of PdxS, forms a dodecamer of heterodimers. Only shows activity in the heterodimer.</text>
</comment>
<comment type="similarity">
    <text evidence="1">Belongs to the glutaminase PdxT/SNO family.</text>
</comment>
<proteinExistence type="inferred from homology"/>
<evidence type="ECO:0000255" key="1">
    <source>
        <dbReference type="HAMAP-Rule" id="MF_01615"/>
    </source>
</evidence>
<name>PDXT_STRCO</name>
<gene>
    <name evidence="1" type="primary">pdxT</name>
    <name type="ordered locus">SCO1522</name>
    <name type="ORF">SCL2.12c</name>
</gene>
<sequence length="202" mass="21536">MSDTPVIGVLALQGDVREHLVALAVADAVARPVRRPEELAEVDGLVLPGGESTTISKLAVLFGVMDPLRARVRDGMPVYGTCAGMIMLADKILDPRSGQETVGGIDMIVRRNAFGRQNESFEAAVDVEGVEGEPVEGVFIRAPWVESVGAAAEVLAEHDGHIVAVRQGNALATSFHPELTGDHRVHRLFADMVRANRAAQSL</sequence>
<keyword id="KW-0315">Glutamine amidotransferase</keyword>
<keyword id="KW-0378">Hydrolase</keyword>
<keyword id="KW-0456">Lyase</keyword>
<keyword id="KW-0663">Pyridoxal phosphate</keyword>
<keyword id="KW-1185">Reference proteome</keyword>